<evidence type="ECO:0000255" key="1">
    <source>
        <dbReference type="HAMAP-Rule" id="MF_00532"/>
    </source>
</evidence>
<evidence type="ECO:0000256" key="2">
    <source>
        <dbReference type="SAM" id="MobiDB-lite"/>
    </source>
</evidence>
<evidence type="ECO:0000305" key="3"/>
<accession>Q8PW44</accession>
<keyword id="KW-0687">Ribonucleoprotein</keyword>
<keyword id="KW-0689">Ribosomal protein</keyword>
<comment type="similarity">
    <text evidence="1">Belongs to the universal ribosomal protein uS9 family.</text>
</comment>
<dbReference type="EMBL" id="AE008384">
    <property type="protein sequence ID" value="AAM31453.1"/>
    <property type="molecule type" value="Genomic_DNA"/>
</dbReference>
<dbReference type="RefSeq" id="WP_011033697.1">
    <property type="nucleotide sequence ID" value="NC_003901.1"/>
</dbReference>
<dbReference type="SMR" id="Q8PW44"/>
<dbReference type="KEGG" id="mma:MM_1757"/>
<dbReference type="PATRIC" id="fig|192952.21.peg.2033"/>
<dbReference type="eggNOG" id="arCOG04243">
    <property type="taxonomic scope" value="Archaea"/>
</dbReference>
<dbReference type="HOGENOM" id="CLU_046483_4_0_2"/>
<dbReference type="Proteomes" id="UP000000595">
    <property type="component" value="Chromosome"/>
</dbReference>
<dbReference type="GO" id="GO:0022627">
    <property type="term" value="C:cytosolic small ribosomal subunit"/>
    <property type="evidence" value="ECO:0007669"/>
    <property type="project" value="TreeGrafter"/>
</dbReference>
<dbReference type="GO" id="GO:0003723">
    <property type="term" value="F:RNA binding"/>
    <property type="evidence" value="ECO:0007669"/>
    <property type="project" value="TreeGrafter"/>
</dbReference>
<dbReference type="GO" id="GO:0003735">
    <property type="term" value="F:structural constituent of ribosome"/>
    <property type="evidence" value="ECO:0007669"/>
    <property type="project" value="InterPro"/>
</dbReference>
<dbReference type="GO" id="GO:0000462">
    <property type="term" value="P:maturation of SSU-rRNA from tricistronic rRNA transcript (SSU-rRNA, 5.8S rRNA, LSU-rRNA)"/>
    <property type="evidence" value="ECO:0007669"/>
    <property type="project" value="TreeGrafter"/>
</dbReference>
<dbReference type="GO" id="GO:0006412">
    <property type="term" value="P:translation"/>
    <property type="evidence" value="ECO:0007669"/>
    <property type="project" value="UniProtKB-UniRule"/>
</dbReference>
<dbReference type="FunFam" id="3.30.230.10:FF:000051">
    <property type="entry name" value="30S ribosomal protein S9"/>
    <property type="match status" value="1"/>
</dbReference>
<dbReference type="Gene3D" id="3.30.230.10">
    <property type="match status" value="1"/>
</dbReference>
<dbReference type="HAMAP" id="MF_00532_A">
    <property type="entry name" value="Ribosomal_uS9_A"/>
    <property type="match status" value="1"/>
</dbReference>
<dbReference type="InterPro" id="IPR020568">
    <property type="entry name" value="Ribosomal_Su5_D2-typ_SF"/>
</dbReference>
<dbReference type="InterPro" id="IPR000754">
    <property type="entry name" value="Ribosomal_uS9"/>
</dbReference>
<dbReference type="InterPro" id="IPR019958">
    <property type="entry name" value="Ribosomal_uS9_archaeal"/>
</dbReference>
<dbReference type="InterPro" id="IPR020574">
    <property type="entry name" value="Ribosomal_uS9_CS"/>
</dbReference>
<dbReference type="InterPro" id="IPR014721">
    <property type="entry name" value="Ribsml_uS5_D2-typ_fold_subgr"/>
</dbReference>
<dbReference type="NCBIfam" id="NF001749">
    <property type="entry name" value="PRK00474.1"/>
    <property type="match status" value="1"/>
</dbReference>
<dbReference type="NCBIfam" id="TIGR03627">
    <property type="entry name" value="uS9_arch"/>
    <property type="match status" value="1"/>
</dbReference>
<dbReference type="PANTHER" id="PTHR21569:SF16">
    <property type="entry name" value="RIBOSOMAL PROTEIN S16"/>
    <property type="match status" value="1"/>
</dbReference>
<dbReference type="PANTHER" id="PTHR21569">
    <property type="entry name" value="RIBOSOMAL PROTEIN S9"/>
    <property type="match status" value="1"/>
</dbReference>
<dbReference type="Pfam" id="PF00380">
    <property type="entry name" value="Ribosomal_S9"/>
    <property type="match status" value="1"/>
</dbReference>
<dbReference type="SUPFAM" id="SSF54211">
    <property type="entry name" value="Ribosomal protein S5 domain 2-like"/>
    <property type="match status" value="1"/>
</dbReference>
<dbReference type="PROSITE" id="PS00360">
    <property type="entry name" value="RIBOSOMAL_S9"/>
    <property type="match status" value="1"/>
</dbReference>
<protein>
    <recommendedName>
        <fullName evidence="1">Small ribosomal subunit protein uS9</fullName>
    </recommendedName>
    <alternativeName>
        <fullName evidence="3">30S ribosomal protein S9</fullName>
    </alternativeName>
</protein>
<reference key="1">
    <citation type="journal article" date="2002" name="J. Mol. Microbiol. Biotechnol.">
        <title>The genome of Methanosarcina mazei: evidence for lateral gene transfer between Bacteria and Archaea.</title>
        <authorList>
            <person name="Deppenmeier U."/>
            <person name="Johann A."/>
            <person name="Hartsch T."/>
            <person name="Merkl R."/>
            <person name="Schmitz R.A."/>
            <person name="Martinez-Arias R."/>
            <person name="Henne A."/>
            <person name="Wiezer A."/>
            <person name="Baeumer S."/>
            <person name="Jacobi C."/>
            <person name="Brueggemann H."/>
            <person name="Lienard T."/>
            <person name="Christmann A."/>
            <person name="Boemecke M."/>
            <person name="Steckel S."/>
            <person name="Bhattacharyya A."/>
            <person name="Lykidis A."/>
            <person name="Overbeek R."/>
            <person name="Klenk H.-P."/>
            <person name="Gunsalus R.P."/>
            <person name="Fritz H.-J."/>
            <person name="Gottschalk G."/>
        </authorList>
    </citation>
    <scope>NUCLEOTIDE SEQUENCE [LARGE SCALE GENOMIC DNA]</scope>
    <source>
        <strain>ATCC BAA-159 / DSM 3647 / Goe1 / Go1 / JCM 11833 / OCM 88</strain>
    </source>
</reference>
<proteinExistence type="inferred from homology"/>
<gene>
    <name evidence="1" type="primary">rps9</name>
    <name type="ordered locus">MM_1757</name>
</gene>
<feature type="chain" id="PRO_0000111467" description="Small ribosomal subunit protein uS9">
    <location>
        <begin position="1"/>
        <end position="134"/>
    </location>
</feature>
<feature type="region of interest" description="Disordered" evidence="2">
    <location>
        <begin position="114"/>
        <end position="134"/>
    </location>
</feature>
<name>RS9_METMA</name>
<sequence>MVKVINSSGKHKTATARATVMKGTGKVRINKIPLELYTPELAMMKISEPLLIAGKDVVSGLDINVDVRGGGIVGQANAVRTAVARGIVEWTNDTTIRDNFAAYDRNLLVSDSRQKEAKNFGGPGARSKYQKSYR</sequence>
<organism>
    <name type="scientific">Methanosarcina mazei (strain ATCC BAA-159 / DSM 3647 / Goe1 / Go1 / JCM 11833 / OCM 88)</name>
    <name type="common">Methanosarcina frisia</name>
    <dbReference type="NCBI Taxonomy" id="192952"/>
    <lineage>
        <taxon>Archaea</taxon>
        <taxon>Methanobacteriati</taxon>
        <taxon>Methanobacteriota</taxon>
        <taxon>Stenosarchaea group</taxon>
        <taxon>Methanomicrobia</taxon>
        <taxon>Methanosarcinales</taxon>
        <taxon>Methanosarcinaceae</taxon>
        <taxon>Methanosarcina</taxon>
    </lineage>
</organism>